<comment type="function">
    <text evidence="1">Core subunit of the mitochondrial membrane respiratory chain NADH dehydrogenase (Complex I) that is believed to belong to the minimal assembly required for catalysis. Complex I functions in the transfer of electrons from NADH to the respiratory chain. The immediate electron acceptor for the enzyme is believed to be ubiquinone (By similarity).</text>
</comment>
<comment type="catalytic activity">
    <reaction>
        <text>a ubiquinone + NADH + 5 H(+)(in) = a ubiquinol + NAD(+) + 4 H(+)(out)</text>
        <dbReference type="Rhea" id="RHEA:29091"/>
        <dbReference type="Rhea" id="RHEA-COMP:9565"/>
        <dbReference type="Rhea" id="RHEA-COMP:9566"/>
        <dbReference type="ChEBI" id="CHEBI:15378"/>
        <dbReference type="ChEBI" id="CHEBI:16389"/>
        <dbReference type="ChEBI" id="CHEBI:17976"/>
        <dbReference type="ChEBI" id="CHEBI:57540"/>
        <dbReference type="ChEBI" id="CHEBI:57945"/>
        <dbReference type="EC" id="7.1.1.2"/>
    </reaction>
</comment>
<comment type="subcellular location">
    <subcellularLocation>
        <location evidence="1">Mitochondrion inner membrane</location>
        <topology evidence="1">Multi-pass membrane protein</topology>
    </subcellularLocation>
</comment>
<comment type="similarity">
    <text evidence="3">Belongs to the complex I subunit 5 family.</text>
</comment>
<feature type="chain" id="PRO_0000118084" description="NADH-ubiquinone oxidoreductase chain 5">
    <location>
        <begin position="1"/>
        <end position="656"/>
    </location>
</feature>
<feature type="transmembrane region" description="Helical" evidence="2">
    <location>
        <begin position="5"/>
        <end position="23"/>
    </location>
</feature>
<feature type="transmembrane region" description="Helical" evidence="2">
    <location>
        <begin position="30"/>
        <end position="52"/>
    </location>
</feature>
<feature type="transmembrane region" description="Helical" evidence="2">
    <location>
        <begin position="81"/>
        <end position="103"/>
    </location>
</feature>
<feature type="transmembrane region" description="Helical" evidence="2">
    <location>
        <begin position="112"/>
        <end position="129"/>
    </location>
</feature>
<feature type="transmembrane region" description="Helical" evidence="2">
    <location>
        <begin position="133"/>
        <end position="155"/>
    </location>
</feature>
<feature type="transmembrane region" description="Helical" evidence="2">
    <location>
        <begin position="168"/>
        <end position="190"/>
    </location>
</feature>
<feature type="transmembrane region" description="Helical" evidence="2">
    <location>
        <begin position="200"/>
        <end position="222"/>
    </location>
</feature>
<feature type="transmembrane region" description="Helical" evidence="2">
    <location>
        <begin position="243"/>
        <end position="262"/>
    </location>
</feature>
<feature type="transmembrane region" description="Helical" evidence="2">
    <location>
        <begin position="272"/>
        <end position="294"/>
    </location>
</feature>
<feature type="transmembrane region" description="Helical" evidence="2">
    <location>
        <begin position="301"/>
        <end position="320"/>
    </location>
</feature>
<feature type="transmembrane region" description="Helical" evidence="2">
    <location>
        <begin position="324"/>
        <end position="346"/>
    </location>
</feature>
<feature type="transmembrane region" description="Helical" evidence="2">
    <location>
        <begin position="367"/>
        <end position="389"/>
    </location>
</feature>
<feature type="transmembrane region" description="Helical" evidence="2">
    <location>
        <begin position="409"/>
        <end position="431"/>
    </location>
</feature>
<feature type="transmembrane region" description="Helical" evidence="2">
    <location>
        <begin position="452"/>
        <end position="471"/>
    </location>
</feature>
<feature type="transmembrane region" description="Helical" evidence="2">
    <location>
        <begin position="514"/>
        <end position="536"/>
    </location>
</feature>
<feature type="transmembrane region" description="Helical" evidence="2">
    <location>
        <begin position="607"/>
        <end position="629"/>
    </location>
</feature>
<feature type="transmembrane region" description="Helical" evidence="2">
    <location>
        <begin position="634"/>
        <end position="653"/>
    </location>
</feature>
<proteinExistence type="inferred from homology"/>
<protein>
    <recommendedName>
        <fullName>NADH-ubiquinone oxidoreductase chain 5</fullName>
        <ecNumber>7.1.1.2</ecNumber>
    </recommendedName>
</protein>
<sequence length="656" mass="72601">MYLSIIILPVLGSIVAGFFGRKLGVRGAQIITCSCVIVTTILALLAWVEVGFNNIPVTINLFRWIDSEWFNIIWGFQFDSLTVSMLLPVLIISSLVHIYSISYMSGDPHNQRFFSYLSLFTFMMIILVTGNNYLLMFVGWEGVGVCSYLLVSFWFTRIAANQSSISAFLTNRVGDCFLTIGMFAILWSLGNLDYATVFSLAPYINENIITIIGICLVIGAMAKSSQVGLHVWLPMAMEGPTPVSALIHAATMVTAGVYLLMRSSPLIEYSSTVLLICLWLGAITTVFSSLVGLFQQDIKKVIAYSTMSQLGLMVVAIGLSSYNIALFHLVNHAFYKAALFLGAGSIIHAVADNQDFRKYGGLREFLPLTYSIILIASLSLAAFPFLTGFYSKDLILESAFGQFTFSGVSVYAISTIGAIFTTLYSVKVIYLTFLANPNGSLMTVRHAHEGDIFLTLPLVILAIFSIFFGYLTKDIFIGLGSSFFVDNSLYVHPVHEILIDTEFGVPTVFKILPFIFTVLFSILAILLSEFIPGSVFNFKLSRFGYNLFGFFNQRFLIEMFYNNYITNLVLTLGSQTTKVLDKGSVELIGPFGLEKGLMNFSKSLTKLSTGVVTSYALYILLGLISFIIILYLSQISSSLIVLLIILTLFSLNFNKQ</sequence>
<gene>
    <name type="primary">ND5</name>
</gene>
<organism>
    <name type="scientific">Cryphonectria parasitica</name>
    <name type="common">Chestnut blight fungus</name>
    <name type="synonym">Endothia parasitica</name>
    <dbReference type="NCBI Taxonomy" id="5116"/>
    <lineage>
        <taxon>Eukaryota</taxon>
        <taxon>Fungi</taxon>
        <taxon>Dikarya</taxon>
        <taxon>Ascomycota</taxon>
        <taxon>Pezizomycotina</taxon>
        <taxon>Sordariomycetes</taxon>
        <taxon>Sordariomycetidae</taxon>
        <taxon>Diaporthales</taxon>
        <taxon>Cryphonectriaceae</taxon>
        <taxon>Cryphonectria-Endothia species complex</taxon>
        <taxon>Cryphonectria</taxon>
    </lineage>
</organism>
<reference key="1">
    <citation type="journal article" date="2003" name="Fungal Genet. Biol.">
        <title>Mapping and characterization of polymorphism in mtDNA of Cryphonectria parasitica: evidence of the presence of an optional intron.</title>
        <authorList>
            <person name="Gobbi E."/>
            <person name="Firrao G."/>
            <person name="Carpanelli A."/>
            <person name="Locci R."/>
            <person name="Van Alfen N.K."/>
        </authorList>
    </citation>
    <scope>NUCLEOTIDE SEQUENCE [GENOMIC DNA]</scope>
</reference>
<dbReference type="EC" id="7.1.1.2"/>
<dbReference type="EMBL" id="AF456838">
    <property type="protein sequence ID" value="AAO14099.1"/>
    <property type="molecule type" value="Genomic_DNA"/>
</dbReference>
<dbReference type="SMR" id="Q8HHD2"/>
<dbReference type="GO" id="GO:0005743">
    <property type="term" value="C:mitochondrial inner membrane"/>
    <property type="evidence" value="ECO:0007669"/>
    <property type="project" value="UniProtKB-SubCell"/>
</dbReference>
<dbReference type="GO" id="GO:0008137">
    <property type="term" value="F:NADH dehydrogenase (ubiquinone) activity"/>
    <property type="evidence" value="ECO:0007669"/>
    <property type="project" value="UniProtKB-EC"/>
</dbReference>
<dbReference type="GO" id="GO:0042773">
    <property type="term" value="P:ATP synthesis coupled electron transport"/>
    <property type="evidence" value="ECO:0007669"/>
    <property type="project" value="InterPro"/>
</dbReference>
<dbReference type="GO" id="GO:0015990">
    <property type="term" value="P:electron transport coupled proton transport"/>
    <property type="evidence" value="ECO:0007669"/>
    <property type="project" value="TreeGrafter"/>
</dbReference>
<dbReference type="Gene3D" id="1.20.5.2700">
    <property type="match status" value="1"/>
</dbReference>
<dbReference type="InterPro" id="IPR010934">
    <property type="entry name" value="NADH_DH_su5_C"/>
</dbReference>
<dbReference type="InterPro" id="IPR018393">
    <property type="entry name" value="NADHpl_OxRdtase_5_subgr"/>
</dbReference>
<dbReference type="InterPro" id="IPR001750">
    <property type="entry name" value="ND/Mrp_TM"/>
</dbReference>
<dbReference type="InterPro" id="IPR003945">
    <property type="entry name" value="NU5C-like"/>
</dbReference>
<dbReference type="InterPro" id="IPR001516">
    <property type="entry name" value="Proton_antipo_N"/>
</dbReference>
<dbReference type="NCBIfam" id="TIGR01974">
    <property type="entry name" value="NDH_I_L"/>
    <property type="match status" value="1"/>
</dbReference>
<dbReference type="NCBIfam" id="NF005141">
    <property type="entry name" value="PRK06590.1"/>
    <property type="match status" value="1"/>
</dbReference>
<dbReference type="PANTHER" id="PTHR42829">
    <property type="entry name" value="NADH-UBIQUINONE OXIDOREDUCTASE CHAIN 5"/>
    <property type="match status" value="1"/>
</dbReference>
<dbReference type="PANTHER" id="PTHR42829:SF2">
    <property type="entry name" value="NADH-UBIQUINONE OXIDOREDUCTASE CHAIN 5"/>
    <property type="match status" value="1"/>
</dbReference>
<dbReference type="Pfam" id="PF06455">
    <property type="entry name" value="NADH5_C"/>
    <property type="match status" value="1"/>
</dbReference>
<dbReference type="Pfam" id="PF00361">
    <property type="entry name" value="Proton_antipo_M"/>
    <property type="match status" value="1"/>
</dbReference>
<dbReference type="Pfam" id="PF00662">
    <property type="entry name" value="Proton_antipo_N"/>
    <property type="match status" value="1"/>
</dbReference>
<dbReference type="PRINTS" id="PR01434">
    <property type="entry name" value="NADHDHGNASE5"/>
</dbReference>
<accession>Q8HHD2</accession>
<name>NU5M_CRYPA</name>
<keyword id="KW-0249">Electron transport</keyword>
<keyword id="KW-0472">Membrane</keyword>
<keyword id="KW-0496">Mitochondrion</keyword>
<keyword id="KW-0999">Mitochondrion inner membrane</keyword>
<keyword id="KW-0520">NAD</keyword>
<keyword id="KW-0679">Respiratory chain</keyword>
<keyword id="KW-1278">Translocase</keyword>
<keyword id="KW-0812">Transmembrane</keyword>
<keyword id="KW-1133">Transmembrane helix</keyword>
<keyword id="KW-0813">Transport</keyword>
<keyword id="KW-0830">Ubiquinone</keyword>
<geneLocation type="mitochondrion"/>
<evidence type="ECO:0000250" key="1"/>
<evidence type="ECO:0000255" key="2"/>
<evidence type="ECO:0000305" key="3"/>